<accession>P04783</accession>
<feature type="transit peptide" description="Chloroplast" evidence="6">
    <location>
        <begin position="1"/>
        <end position="35"/>
    </location>
</feature>
<feature type="chain" id="PRO_0000003687" description="Chlorophyll a-b binding protein 91R, chloroplastic">
    <location>
        <begin position="36"/>
        <end position="267"/>
    </location>
</feature>
<feature type="transmembrane region" description="Helical" evidence="4">
    <location>
        <begin position="101"/>
        <end position="121"/>
    </location>
</feature>
<feature type="transmembrane region" description="Helical" evidence="4">
    <location>
        <begin position="153"/>
        <end position="173"/>
    </location>
</feature>
<feature type="transmembrane region" description="Helical" evidence="4">
    <location>
        <begin position="221"/>
        <end position="241"/>
    </location>
</feature>
<feature type="region of interest" description="Disordered" evidence="5">
    <location>
        <begin position="15"/>
        <end position="40"/>
    </location>
</feature>
<feature type="binding site" description="axial binding residue" evidence="3">
    <location>
        <position position="59"/>
    </location>
    <ligand>
        <name>chlorophyll b</name>
        <dbReference type="ChEBI" id="CHEBI:61721"/>
        <label>1</label>
    </ligand>
    <ligandPart>
        <name>Mg</name>
        <dbReference type="ChEBI" id="CHEBI:25107"/>
    </ligandPart>
</feature>
<feature type="binding site" evidence="1">
    <location>
        <position position="81"/>
    </location>
    <ligand>
        <name>chlorophyll a</name>
        <dbReference type="ChEBI" id="CHEBI:58416"/>
        <label>1</label>
    </ligand>
</feature>
<feature type="binding site" evidence="1">
    <location>
        <position position="87"/>
    </location>
    <ligand>
        <name>chlorophyll a</name>
        <dbReference type="ChEBI" id="CHEBI:58416"/>
        <label>1</label>
    </ligand>
</feature>
<feature type="binding site" description="axial binding residue" evidence="2">
    <location>
        <position position="100"/>
    </location>
    <ligand>
        <name>chlorophyll a</name>
        <dbReference type="ChEBI" id="CHEBI:58416"/>
        <label>1</label>
    </ligand>
    <ligandPart>
        <name>Mg</name>
        <dbReference type="ChEBI" id="CHEBI:25107"/>
    </ligandPart>
</feature>
<feature type="binding site" description="axial binding residue" evidence="2">
    <location>
        <position position="103"/>
    </location>
    <ligand>
        <name>chlorophyll a</name>
        <dbReference type="ChEBI" id="CHEBI:58416"/>
        <label>2</label>
    </ligand>
    <ligandPart>
        <name>Mg</name>
        <dbReference type="ChEBI" id="CHEBI:25107"/>
    </ligandPart>
</feature>
<feature type="binding site" evidence="1">
    <location>
        <position position="105"/>
    </location>
    <ligand>
        <name>chlorophyll b</name>
        <dbReference type="ChEBI" id="CHEBI:61721"/>
        <label>2</label>
    </ligand>
</feature>
<feature type="binding site" evidence="1">
    <location>
        <position position="138"/>
    </location>
    <ligand>
        <name>chlorophyll a</name>
        <dbReference type="ChEBI" id="CHEBI:58416"/>
        <label>3</label>
    </ligand>
</feature>
<feature type="binding site" evidence="1">
    <location>
        <position position="148"/>
    </location>
    <ligand>
        <name>chlorophyll a</name>
        <dbReference type="ChEBI" id="CHEBI:58416"/>
        <label>3</label>
    </ligand>
</feature>
<feature type="binding site" description="axial binding residue" evidence="2">
    <location>
        <position position="154"/>
    </location>
    <ligand>
        <name>chlorophyll b</name>
        <dbReference type="ChEBI" id="CHEBI:61721"/>
        <label>2</label>
    </ligand>
    <ligandPart>
        <name>Mg</name>
        <dbReference type="ChEBI" id="CHEBI:25107"/>
    </ligandPart>
</feature>
<feature type="binding site" evidence="1">
    <location>
        <position position="158"/>
    </location>
    <ligand>
        <name>chlorophyll b</name>
        <dbReference type="ChEBI" id="CHEBI:61721"/>
        <label>3</label>
    </ligand>
</feature>
<feature type="binding site" evidence="1">
    <location>
        <position position="166"/>
    </location>
    <ligand>
        <name>chlorophyll b</name>
        <dbReference type="ChEBI" id="CHEBI:61721"/>
        <label>4</label>
    </ligand>
</feature>
<feature type="binding site" evidence="2">
    <location>
        <position position="166"/>
    </location>
    <ligand>
        <name>chlorophyll b</name>
        <dbReference type="ChEBI" id="CHEBI:61721"/>
        <label>5</label>
    </ligand>
</feature>
<feature type="binding site" description="axial binding residue" evidence="2">
    <location>
        <position position="174"/>
    </location>
    <ligand>
        <name>chlorophyll b</name>
        <dbReference type="ChEBI" id="CHEBI:61721"/>
        <label>3</label>
    </ligand>
    <ligandPart>
        <name>Mg</name>
        <dbReference type="ChEBI" id="CHEBI:25107"/>
    </ligandPart>
</feature>
<feature type="binding site" evidence="1">
    <location>
        <position position="177"/>
    </location>
    <ligand>
        <name>chlorophyll b</name>
        <dbReference type="ChEBI" id="CHEBI:61721"/>
        <label>4</label>
    </ligand>
</feature>
<feature type="binding site" evidence="1">
    <location>
        <position position="183"/>
    </location>
    <ligand>
        <name>chlorophyll b</name>
        <dbReference type="ChEBI" id="CHEBI:61721"/>
        <label>2</label>
    </ligand>
</feature>
<feature type="binding site" evidence="1">
    <location>
        <position position="214"/>
    </location>
    <ligand>
        <name>chlorophyll a</name>
        <dbReference type="ChEBI" id="CHEBI:58416"/>
        <label>5</label>
    </ligand>
</feature>
<feature type="binding site" description="axial binding residue" evidence="2">
    <location>
        <position position="215"/>
    </location>
    <ligand>
        <name>chlorophyll a</name>
        <dbReference type="ChEBI" id="CHEBI:58416"/>
        <label>3</label>
    </ligand>
    <ligandPart>
        <name>Mg</name>
        <dbReference type="ChEBI" id="CHEBI:25107"/>
    </ligandPart>
</feature>
<feature type="binding site" description="axial binding residue" evidence="2">
    <location>
        <position position="218"/>
    </location>
    <ligand>
        <name>chlorophyll a</name>
        <dbReference type="ChEBI" id="CHEBI:58416"/>
        <label>4</label>
    </ligand>
    <ligandPart>
        <name>Mg</name>
        <dbReference type="ChEBI" id="CHEBI:25107"/>
    </ligandPart>
</feature>
<feature type="binding site" evidence="1">
    <location>
        <position position="220"/>
    </location>
    <ligand>
        <name>chlorophyll a</name>
        <dbReference type="ChEBI" id="CHEBI:58416"/>
        <label>1</label>
    </ligand>
</feature>
<feature type="binding site" description="axial binding residue" evidence="2">
    <location>
        <position position="232"/>
    </location>
    <ligand>
        <name>chlorophyll a</name>
        <dbReference type="ChEBI" id="CHEBI:58416"/>
        <label>5</label>
    </ligand>
    <ligandPart>
        <name>Mg</name>
        <dbReference type="ChEBI" id="CHEBI:25107"/>
    </ligandPart>
</feature>
<feature type="binding site" description="axial binding residue" evidence="2">
    <location>
        <position position="247"/>
    </location>
    <ligand>
        <name>chlorophyll a</name>
        <dbReference type="ChEBI" id="CHEBI:58416"/>
        <label>6</label>
    </ligand>
    <ligandPart>
        <name>Mg</name>
        <dbReference type="ChEBI" id="CHEBI:25107"/>
    </ligandPart>
</feature>
<feature type="binding site" evidence="1">
    <location>
        <position position="256"/>
    </location>
    <ligand>
        <name>chlorophyll a</name>
        <dbReference type="ChEBI" id="CHEBI:58416"/>
        <label>6</label>
    </ligand>
</feature>
<feature type="binding site" evidence="1">
    <location>
        <position position="263"/>
    </location>
    <ligand>
        <name>chlorophyll b</name>
        <dbReference type="ChEBI" id="CHEBI:61721"/>
        <label>5</label>
    </ligand>
</feature>
<feature type="modified residue" description="N2-acetylarginine" evidence="1">
    <location>
        <position position="36"/>
    </location>
</feature>
<feature type="modified residue" description="Phosphothreonine" evidence="1">
    <location>
        <position position="38"/>
    </location>
</feature>
<organism>
    <name type="scientific">Petunia sp.</name>
    <name type="common">Petunia</name>
    <dbReference type="NCBI Taxonomy" id="4104"/>
    <lineage>
        <taxon>Eukaryota</taxon>
        <taxon>Viridiplantae</taxon>
        <taxon>Streptophyta</taxon>
        <taxon>Embryophyta</taxon>
        <taxon>Tracheophyta</taxon>
        <taxon>Spermatophyta</taxon>
        <taxon>Magnoliopsida</taxon>
        <taxon>eudicotyledons</taxon>
        <taxon>Gunneridae</taxon>
        <taxon>Pentapetalae</taxon>
        <taxon>asterids</taxon>
        <taxon>lamiids</taxon>
        <taxon>Solanales</taxon>
        <taxon>Solanaceae</taxon>
        <taxon>Petunioideae</taxon>
        <taxon>Petunia</taxon>
    </lineage>
</organism>
<protein>
    <recommendedName>
        <fullName>Chlorophyll a-b binding protein 91R, chloroplastic</fullName>
    </recommendedName>
    <alternativeName>
        <fullName>LHCII type I CAB-91R</fullName>
        <shortName>LHCP</shortName>
    </alternativeName>
</protein>
<keyword id="KW-0007">Acetylation</keyword>
<keyword id="KW-0148">Chlorophyll</keyword>
<keyword id="KW-0150">Chloroplast</keyword>
<keyword id="KW-0157">Chromophore</keyword>
<keyword id="KW-0460">Magnesium</keyword>
<keyword id="KW-0472">Membrane</keyword>
<keyword id="KW-0479">Metal-binding</keyword>
<keyword id="KW-0597">Phosphoprotein</keyword>
<keyword id="KW-0602">Photosynthesis</keyword>
<keyword id="KW-0603">Photosystem I</keyword>
<keyword id="KW-0604">Photosystem II</keyword>
<keyword id="KW-0934">Plastid</keyword>
<keyword id="KW-0793">Thylakoid</keyword>
<keyword id="KW-0809">Transit peptide</keyword>
<keyword id="KW-0812">Transmembrane</keyword>
<keyword id="KW-1133">Transmembrane helix</keyword>
<dbReference type="EMBL" id="X02356">
    <property type="protein sequence ID" value="CAA26209.1"/>
    <property type="molecule type" value="Genomic_DNA"/>
</dbReference>
<dbReference type="PIR" id="A22936">
    <property type="entry name" value="CDPJ91"/>
</dbReference>
<dbReference type="SMR" id="P04783"/>
<dbReference type="GO" id="GO:0009535">
    <property type="term" value="C:chloroplast thylakoid membrane"/>
    <property type="evidence" value="ECO:0007669"/>
    <property type="project" value="UniProtKB-SubCell"/>
</dbReference>
<dbReference type="GO" id="GO:0009522">
    <property type="term" value="C:photosystem I"/>
    <property type="evidence" value="ECO:0007669"/>
    <property type="project" value="UniProtKB-KW"/>
</dbReference>
<dbReference type="GO" id="GO:0009523">
    <property type="term" value="C:photosystem II"/>
    <property type="evidence" value="ECO:0007669"/>
    <property type="project" value="UniProtKB-KW"/>
</dbReference>
<dbReference type="GO" id="GO:0016168">
    <property type="term" value="F:chlorophyll binding"/>
    <property type="evidence" value="ECO:0007669"/>
    <property type="project" value="UniProtKB-KW"/>
</dbReference>
<dbReference type="GO" id="GO:0046872">
    <property type="term" value="F:metal ion binding"/>
    <property type="evidence" value="ECO:0007669"/>
    <property type="project" value="UniProtKB-KW"/>
</dbReference>
<dbReference type="GO" id="GO:0009765">
    <property type="term" value="P:photosynthesis, light harvesting"/>
    <property type="evidence" value="ECO:0007669"/>
    <property type="project" value="InterPro"/>
</dbReference>
<dbReference type="FunFam" id="1.10.3460.10:FF:000001">
    <property type="entry name" value="Chlorophyll a-b binding protein, chloroplastic"/>
    <property type="match status" value="1"/>
</dbReference>
<dbReference type="Gene3D" id="1.10.3460.10">
    <property type="entry name" value="Chlorophyll a/b binding protein domain"/>
    <property type="match status" value="1"/>
</dbReference>
<dbReference type="InterPro" id="IPR001344">
    <property type="entry name" value="Chloro_AB-bd_pln"/>
</dbReference>
<dbReference type="InterPro" id="IPR022796">
    <property type="entry name" value="Chloroa_b-bind"/>
</dbReference>
<dbReference type="PANTHER" id="PTHR21649">
    <property type="entry name" value="CHLOROPHYLL A/B BINDING PROTEIN"/>
    <property type="match status" value="1"/>
</dbReference>
<dbReference type="Pfam" id="PF00504">
    <property type="entry name" value="Chloroa_b-bind"/>
    <property type="match status" value="1"/>
</dbReference>
<dbReference type="SUPFAM" id="SSF103511">
    <property type="entry name" value="Chlorophyll a-b binding protein"/>
    <property type="match status" value="1"/>
</dbReference>
<sequence length="267" mass="28383">MAAATMALSSPSFAGKAVKFSPSSSEITGNGKATMRKTVTKAKPVSSGSPWYGPDRVKYLGPFSGEAPSYLTGEFPGDYGWDTAELSADPETFAKNRELEVIHCRWAMLGALGCVFPELLARNGVKFGEAVWFKAGSQIFSEGGLDYLGNPSLVHAQSILAIWACQVVLMGAVEGYRVAGGPLGEVVDPLYPGGSFDPLGLADDPEAFAELKVKEIKNGRLAMFSMFGFFVQAIVTGKGPLENLADHLADPVNNNAWSYATNFVPGK</sequence>
<evidence type="ECO:0000250" key="1"/>
<evidence type="ECO:0000250" key="2">
    <source>
        <dbReference type="UniProtKB" id="P07371"/>
    </source>
</evidence>
<evidence type="ECO:0000250" key="3">
    <source>
        <dbReference type="UniProtKB" id="P12333"/>
    </source>
</evidence>
<evidence type="ECO:0000255" key="4"/>
<evidence type="ECO:0000256" key="5">
    <source>
        <dbReference type="SAM" id="MobiDB-lite"/>
    </source>
</evidence>
<evidence type="ECO:0000305" key="6"/>
<gene>
    <name type="primary">CAB91R</name>
</gene>
<comment type="function">
    <text>The light-harvesting complex (LHC) functions as a light receptor, it captures and delivers excitation energy to photosystems with which it is closely associated.</text>
</comment>
<comment type="cofactor">
    <text evidence="1">Binds at least 14 chlorophylls (8 Chl-a and 6 Chl-b) and carotenoids such as lutein and neoxanthin.</text>
</comment>
<comment type="subunit">
    <text>The LHC complex consists of chlorophyll a-b binding proteins.</text>
</comment>
<comment type="subcellular location">
    <subcellularLocation>
        <location>Plastid</location>
        <location>Chloroplast thylakoid membrane</location>
        <topology>Multi-pass membrane protein</topology>
    </subcellularLocation>
</comment>
<comment type="domain">
    <text>The N-terminus of the protein extends into the stroma where it is involved with adhesion of granal membranes and post-translational modifications; both are believed to mediate the distribution of excitation energy between photosystems I and II.</text>
</comment>
<comment type="PTM">
    <text evidence="1">Photoregulated by reversible phosphorylation of its threonine residues.</text>
</comment>
<comment type="miscellaneous">
    <text>There are at least 16 genes for the major CAB protein which can be classified into at least 5 small multigene families.</text>
</comment>
<comment type="similarity">
    <text evidence="6">Belongs to the light-harvesting chlorophyll a/b-binding (LHC) protein family.</text>
</comment>
<proteinExistence type="inferred from homology"/>
<name>CB25_PETSP</name>
<reference key="1">
    <citation type="journal article" date="1985" name="Nucleic Acids Res.">
        <title>The petunia chlorophyll a/b binding protein genes: a comparison of Cab genes from different gene families.</title>
        <authorList>
            <person name="Dunsmuir P."/>
        </authorList>
    </citation>
    <scope>NUCLEOTIDE SEQUENCE [GENOMIC DNA]</scope>
</reference>